<dbReference type="EC" id="3.4.-.-" evidence="4"/>
<dbReference type="SMR" id="P0DV51"/>
<dbReference type="GO" id="GO:0004197">
    <property type="term" value="F:cysteine-type endopeptidase activity"/>
    <property type="evidence" value="ECO:0007669"/>
    <property type="project" value="InterPro"/>
</dbReference>
<dbReference type="GO" id="GO:0051607">
    <property type="term" value="P:defense response to virus"/>
    <property type="evidence" value="ECO:0007669"/>
    <property type="project" value="UniProtKB-KW"/>
</dbReference>
<dbReference type="GO" id="GO:0006508">
    <property type="term" value="P:proteolysis"/>
    <property type="evidence" value="ECO:0007669"/>
    <property type="project" value="UniProtKB-KW"/>
</dbReference>
<dbReference type="Gene3D" id="3.40.50.1460">
    <property type="match status" value="1"/>
</dbReference>
<dbReference type="InterPro" id="IPR029030">
    <property type="entry name" value="Caspase-like_dom_sf"/>
</dbReference>
<dbReference type="InterPro" id="IPR052039">
    <property type="entry name" value="Caspase-related_regulators"/>
</dbReference>
<dbReference type="InterPro" id="IPR011600">
    <property type="entry name" value="Pept_C14_caspase"/>
</dbReference>
<dbReference type="PANTHER" id="PTHR22576">
    <property type="entry name" value="MUCOSA ASSOCIATED LYMPHOID TISSUE LYMPHOMA TRANSLOCATION PROTEIN 1/PARACASPASE"/>
    <property type="match status" value="1"/>
</dbReference>
<dbReference type="PANTHER" id="PTHR22576:SF37">
    <property type="entry name" value="MUCOSA-ASSOCIATED LYMPHOID TISSUE LYMPHOMA TRANSLOCATION PROTEIN 1"/>
    <property type="match status" value="1"/>
</dbReference>
<dbReference type="Pfam" id="PF00656">
    <property type="entry name" value="Peptidase_C14"/>
    <property type="match status" value="1"/>
</dbReference>
<dbReference type="SUPFAM" id="SSF52129">
    <property type="entry name" value="Caspase-like"/>
    <property type="match status" value="1"/>
</dbReference>
<proteinExistence type="inferred from homology"/>
<sequence>MQNWALVIGINRYWRADACLKGAVKDALKMREWLTSIDGGAVPSRNLILLLSPHDDPESCGGASALPATQDMIIQAIEQIFRKSGEEGDRFFFYYSGHGLTARMSFSNESGIIPNDFSDTLTNKALSLRSIFERFQSTRFREQFFFIDACRNIPWEGEREFLISQYPLPKPPKPPVFPQFIMYATSPGVKAVEIHEAGNERGAFTDALLAGLRGTGNAKLWHEEDREYMVRWDNLFRFVEEEVIRRRLSVSENRVPPLIQEPRQFGERGSCNPTLASLPAEVFPEVSLDVHLDPMTVASQTEVIVGDLGGVLRREFPVTALPVHFDLQPRTYSIRTSTPDFRSEKRYYQVDLYGPAEVSIKMVPGTGYSTPVSPSSGVSKSVDGNTATASVLMRSHDPLAYLELLDNSGTTIETGIGQIYRPRVKPGFYRLRLRTPEGIPHERLVELSSGESADITLDAPPQTDSGLFTHIAFTSHMYQGEPNIIQPSEAIGPAQSMHLSTILALAGGAVNEDSSYGGKLRGLGITSFRNIAGEEATSGMQILFGNEVTAPAFTDNYLSAVRLRCWGIDRGIPAEYRQPLHVADITGLAQATWEMEPGSYLLSIELPDRMPVVFPVAALSNRLSLLVVTQDATGVVNFFRYLPSLKDELPGDPRYEAARFPVLRRLEYIQRSCMVGRFEQAYQNARELLNAKWIDPMAGLLGSYLLMRLGKSDELCIPARNLSECFGELSDSHVIAAEYEAGIGNEEKAADAFRRALDNGLPIMSDCLTKLIYGMERYGIEHPRAALAKSYYSHGIKGLLWSACPRKACEAAPGETGADA</sequence>
<reference key="1">
    <citation type="journal article" date="2018" name="Microorganisms">
        <title>Stable Isotope and Metagenomic Profiling of a Methanogenic Naphthalene-Degrading Enrichment Culture.</title>
        <authorList>
            <person name="Toth C.R.A."/>
            <person name="Berdugo-Clavijo C."/>
            <person name="O'Farrell C.M."/>
            <person name="Jones G.M."/>
            <person name="Sheremet A."/>
            <person name="Dunfield P.F."/>
            <person name="Gieg L.M."/>
        </authorList>
    </citation>
    <scope>NUCLEOTIDE SEQUENCE [LARGE SCALE GENOMIC DNA]</scope>
    <source>
        <strain>Bin 1</strain>
    </source>
</reference>
<reference key="2">
    <citation type="journal article" date="2022" name="Science">
        <title>Bacterial gasdermins reveal an ancient mechanism of cell death.</title>
        <authorList>
            <person name="Johnson A.G."/>
            <person name="Wein T."/>
            <person name="Mayer M.L."/>
            <person name="Duncan-Lowey B."/>
            <person name="Yirmiya E."/>
            <person name="Oppenheimer-Shaanan Y."/>
            <person name="Amitai G."/>
            <person name="Sorek R."/>
            <person name="Kranzusch P.J."/>
        </authorList>
    </citation>
    <scope>IDENTIFICATION</scope>
    <scope>FUNCTION</scope>
    <source>
        <strain>Bin 1</strain>
    </source>
</reference>
<protein>
    <recommendedName>
        <fullName evidence="3">Probable protease Ga0182885_104520</fullName>
        <ecNumber evidence="4">3.4.-.-</ecNumber>
    </recommendedName>
</protein>
<keyword id="KW-0051">Antiviral defense</keyword>
<keyword id="KW-0378">Hydrolase</keyword>
<keyword id="KW-0645">Protease</keyword>
<accession>P0DV51</accession>
<evidence type="ECO:0000269" key="1">
    <source>
    </source>
</evidence>
<evidence type="ECO:0000303" key="2">
    <source>
    </source>
</evidence>
<evidence type="ECO:0000305" key="3"/>
<evidence type="ECO:0000305" key="4">
    <source>
    </source>
</evidence>
<name>PROT_DESBX</name>
<organism>
    <name type="scientific">Desulfuromonadales bacterium</name>
    <dbReference type="NCBI Taxonomy" id="2099678"/>
    <lineage>
        <taxon>Bacteria</taxon>
        <taxon>Pseudomonadati</taxon>
        <taxon>Thermodesulfobacteriota</taxon>
        <taxon>Desulfuromonadia</taxon>
        <taxon>Desulfuromonadales</taxon>
    </lineage>
</organism>
<comment type="function">
    <text evidence="1 4">Probably a dedicated protease for substrate gasdermin bGSDM; cleaves the bGSDM precursor, releasing the pore-forming moiety, which integrates into the membrane and triggers cell death. Involved in defense against bacteriophages (Probable). Expression of bacterial gasdermin (bGSDM) and this neighboring protease is toxic in E.coli (PubMed:35025633).</text>
</comment>
<comment type="similarity">
    <text evidence="3">Belongs to the peptidase C25 family.</text>
</comment>
<feature type="chain" id="PRO_0000455586" description="Probable protease Ga0182885_104520">
    <location>
        <begin position="1"/>
        <end position="820"/>
    </location>
</feature>
<gene>
    <name evidence="2" type="ORF">Ga0182885_104520</name>
</gene>